<sequence length="140" mass="15925">MTKLNGTGLLKGLAITFKELWKKPVTLEYPEHKEKLPPRFHGSFTLHSEKCIACGLCQQACPNKVIKVGSIKDENNKRKLASYEMEMKYCLFCGLCVEACPTNALVFNQEYELAKYRIEDIKLTLFKREEITTGEGSENA</sequence>
<keyword id="KW-0004">4Fe-4S</keyword>
<keyword id="KW-1003">Cell membrane</keyword>
<keyword id="KW-0408">Iron</keyword>
<keyword id="KW-0411">Iron-sulfur</keyword>
<keyword id="KW-0472">Membrane</keyword>
<keyword id="KW-0479">Metal-binding</keyword>
<keyword id="KW-0520">NAD</keyword>
<keyword id="KW-0874">Quinone</keyword>
<keyword id="KW-1185">Reference proteome</keyword>
<keyword id="KW-0677">Repeat</keyword>
<keyword id="KW-1278">Translocase</keyword>
<keyword id="KW-0830">Ubiquinone</keyword>
<dbReference type="EC" id="7.1.1.-" evidence="1"/>
<dbReference type="EMBL" id="CP000141">
    <property type="protein sequence ID" value="ABB14704.1"/>
    <property type="molecule type" value="Genomic_DNA"/>
</dbReference>
<dbReference type="RefSeq" id="WP_011344327.1">
    <property type="nucleotide sequence ID" value="NC_007503.1"/>
</dbReference>
<dbReference type="SMR" id="Q3AC82"/>
<dbReference type="STRING" id="246194.CHY_1420"/>
<dbReference type="KEGG" id="chy:CHY_1420"/>
<dbReference type="eggNOG" id="COG1143">
    <property type="taxonomic scope" value="Bacteria"/>
</dbReference>
<dbReference type="HOGENOM" id="CLU_067218_4_3_9"/>
<dbReference type="InParanoid" id="Q3AC82"/>
<dbReference type="OrthoDB" id="9803192at2"/>
<dbReference type="Proteomes" id="UP000002706">
    <property type="component" value="Chromosome"/>
</dbReference>
<dbReference type="GO" id="GO:0005886">
    <property type="term" value="C:plasma membrane"/>
    <property type="evidence" value="ECO:0007669"/>
    <property type="project" value="UniProtKB-SubCell"/>
</dbReference>
<dbReference type="GO" id="GO:0051539">
    <property type="term" value="F:4 iron, 4 sulfur cluster binding"/>
    <property type="evidence" value="ECO:0007669"/>
    <property type="project" value="UniProtKB-KW"/>
</dbReference>
<dbReference type="GO" id="GO:0005506">
    <property type="term" value="F:iron ion binding"/>
    <property type="evidence" value="ECO:0007669"/>
    <property type="project" value="UniProtKB-UniRule"/>
</dbReference>
<dbReference type="GO" id="GO:0050136">
    <property type="term" value="F:NADH:ubiquinone reductase (non-electrogenic) activity"/>
    <property type="evidence" value="ECO:0007669"/>
    <property type="project" value="UniProtKB-UniRule"/>
</dbReference>
<dbReference type="GO" id="GO:0048038">
    <property type="term" value="F:quinone binding"/>
    <property type="evidence" value="ECO:0007669"/>
    <property type="project" value="UniProtKB-KW"/>
</dbReference>
<dbReference type="Gene3D" id="3.30.70.3270">
    <property type="match status" value="1"/>
</dbReference>
<dbReference type="HAMAP" id="MF_01351">
    <property type="entry name" value="NDH1_NuoI"/>
    <property type="match status" value="1"/>
</dbReference>
<dbReference type="InterPro" id="IPR017896">
    <property type="entry name" value="4Fe4S_Fe-S-bd"/>
</dbReference>
<dbReference type="InterPro" id="IPR017900">
    <property type="entry name" value="4Fe4S_Fe_S_CS"/>
</dbReference>
<dbReference type="InterPro" id="IPR010226">
    <property type="entry name" value="NADH_quinone_OxRdtase_chainI"/>
</dbReference>
<dbReference type="NCBIfam" id="TIGR01971">
    <property type="entry name" value="NuoI"/>
    <property type="match status" value="1"/>
</dbReference>
<dbReference type="PANTHER" id="PTHR10849">
    <property type="entry name" value="NADH DEHYDROGENASE UBIQUINONE IRON-SULFUR PROTEIN 8, MITOCHONDRIAL"/>
    <property type="match status" value="1"/>
</dbReference>
<dbReference type="PANTHER" id="PTHR10849:SF24">
    <property type="entry name" value="NADH-QUINONE OXIDOREDUCTASE SUBUNIT I 2"/>
    <property type="match status" value="1"/>
</dbReference>
<dbReference type="Pfam" id="PF12838">
    <property type="entry name" value="Fer4_7"/>
    <property type="match status" value="1"/>
</dbReference>
<dbReference type="SUPFAM" id="SSF54862">
    <property type="entry name" value="4Fe-4S ferredoxins"/>
    <property type="match status" value="1"/>
</dbReference>
<dbReference type="PROSITE" id="PS00198">
    <property type="entry name" value="4FE4S_FER_1"/>
    <property type="match status" value="2"/>
</dbReference>
<dbReference type="PROSITE" id="PS51379">
    <property type="entry name" value="4FE4S_FER_2"/>
    <property type="match status" value="2"/>
</dbReference>
<accession>Q3AC82</accession>
<comment type="function">
    <text evidence="1">NDH-1 shuttles electrons from NADH, via FMN and iron-sulfur (Fe-S) centers, to quinones in the respiratory chain. The immediate electron acceptor for the enzyme in this species is believed to be ubiquinone. Couples the redox reaction to proton translocation (for every two electrons transferred, four hydrogen ions are translocated across the cytoplasmic membrane), and thus conserves the redox energy in a proton gradient.</text>
</comment>
<comment type="catalytic activity">
    <reaction evidence="1">
        <text>a quinone + NADH + 5 H(+)(in) = a quinol + NAD(+) + 4 H(+)(out)</text>
        <dbReference type="Rhea" id="RHEA:57888"/>
        <dbReference type="ChEBI" id="CHEBI:15378"/>
        <dbReference type="ChEBI" id="CHEBI:24646"/>
        <dbReference type="ChEBI" id="CHEBI:57540"/>
        <dbReference type="ChEBI" id="CHEBI:57945"/>
        <dbReference type="ChEBI" id="CHEBI:132124"/>
    </reaction>
</comment>
<comment type="cofactor">
    <cofactor evidence="1">
        <name>[4Fe-4S] cluster</name>
        <dbReference type="ChEBI" id="CHEBI:49883"/>
    </cofactor>
    <text evidence="1">Binds 2 [4Fe-4S] clusters per subunit.</text>
</comment>
<comment type="subunit">
    <text evidence="1">NDH-1 is composed of 14 different subunits. Subunits NuoA, H, J, K, L, M, N constitute the membrane sector of the complex.</text>
</comment>
<comment type="subcellular location">
    <subcellularLocation>
        <location evidence="1">Cell membrane</location>
        <topology evidence="1">Peripheral membrane protein</topology>
    </subcellularLocation>
</comment>
<comment type="similarity">
    <text evidence="1">Belongs to the complex I 23 kDa subunit family.</text>
</comment>
<reference key="1">
    <citation type="journal article" date="2005" name="PLoS Genet.">
        <title>Life in hot carbon monoxide: the complete genome sequence of Carboxydothermus hydrogenoformans Z-2901.</title>
        <authorList>
            <person name="Wu M."/>
            <person name="Ren Q."/>
            <person name="Durkin A.S."/>
            <person name="Daugherty S.C."/>
            <person name="Brinkac L.M."/>
            <person name="Dodson R.J."/>
            <person name="Madupu R."/>
            <person name="Sullivan S.A."/>
            <person name="Kolonay J.F."/>
            <person name="Nelson W.C."/>
            <person name="Tallon L.J."/>
            <person name="Jones K.M."/>
            <person name="Ulrich L.E."/>
            <person name="Gonzalez J.M."/>
            <person name="Zhulin I.B."/>
            <person name="Robb F.T."/>
            <person name="Eisen J.A."/>
        </authorList>
    </citation>
    <scope>NUCLEOTIDE SEQUENCE [LARGE SCALE GENOMIC DNA]</scope>
    <source>
        <strain>ATCC BAA-161 / DSM 6008 / Z-2901</strain>
    </source>
</reference>
<proteinExistence type="inferred from homology"/>
<feature type="chain" id="PRO_0000250896" description="NADH-quinone oxidoreductase subunit I">
    <location>
        <begin position="1"/>
        <end position="140"/>
    </location>
</feature>
<feature type="domain" description="4Fe-4S ferredoxin-type 1" evidence="1">
    <location>
        <begin position="42"/>
        <end position="71"/>
    </location>
</feature>
<feature type="domain" description="4Fe-4S ferredoxin-type 2" evidence="1">
    <location>
        <begin position="81"/>
        <end position="110"/>
    </location>
</feature>
<feature type="binding site" evidence="1">
    <location>
        <position position="51"/>
    </location>
    <ligand>
        <name>[4Fe-4S] cluster</name>
        <dbReference type="ChEBI" id="CHEBI:49883"/>
        <label>1</label>
    </ligand>
</feature>
<feature type="binding site" evidence="1">
    <location>
        <position position="54"/>
    </location>
    <ligand>
        <name>[4Fe-4S] cluster</name>
        <dbReference type="ChEBI" id="CHEBI:49883"/>
        <label>1</label>
    </ligand>
</feature>
<feature type="binding site" evidence="1">
    <location>
        <position position="57"/>
    </location>
    <ligand>
        <name>[4Fe-4S] cluster</name>
        <dbReference type="ChEBI" id="CHEBI:49883"/>
        <label>1</label>
    </ligand>
</feature>
<feature type="binding site" evidence="1">
    <location>
        <position position="61"/>
    </location>
    <ligand>
        <name>[4Fe-4S] cluster</name>
        <dbReference type="ChEBI" id="CHEBI:49883"/>
        <label>2</label>
    </ligand>
</feature>
<feature type="binding site" evidence="1">
    <location>
        <position position="90"/>
    </location>
    <ligand>
        <name>[4Fe-4S] cluster</name>
        <dbReference type="ChEBI" id="CHEBI:49883"/>
        <label>2</label>
    </ligand>
</feature>
<feature type="binding site" evidence="1">
    <location>
        <position position="93"/>
    </location>
    <ligand>
        <name>[4Fe-4S] cluster</name>
        <dbReference type="ChEBI" id="CHEBI:49883"/>
        <label>2</label>
    </ligand>
</feature>
<feature type="binding site" evidence="1">
    <location>
        <position position="96"/>
    </location>
    <ligand>
        <name>[4Fe-4S] cluster</name>
        <dbReference type="ChEBI" id="CHEBI:49883"/>
        <label>2</label>
    </ligand>
</feature>
<feature type="binding site" evidence="1">
    <location>
        <position position="100"/>
    </location>
    <ligand>
        <name>[4Fe-4S] cluster</name>
        <dbReference type="ChEBI" id="CHEBI:49883"/>
        <label>1</label>
    </ligand>
</feature>
<evidence type="ECO:0000255" key="1">
    <source>
        <dbReference type="HAMAP-Rule" id="MF_01351"/>
    </source>
</evidence>
<protein>
    <recommendedName>
        <fullName evidence="1">NADH-quinone oxidoreductase subunit I</fullName>
        <ecNumber evidence="1">7.1.1.-</ecNumber>
    </recommendedName>
    <alternativeName>
        <fullName evidence="1">NADH dehydrogenase I subunit I</fullName>
    </alternativeName>
    <alternativeName>
        <fullName evidence="1">NDH-1 subunit I</fullName>
    </alternativeName>
</protein>
<gene>
    <name evidence="1" type="primary">nuoI</name>
    <name type="ordered locus">CHY_1420</name>
</gene>
<name>NUOI_CARHZ</name>
<organism>
    <name type="scientific">Carboxydothermus hydrogenoformans (strain ATCC BAA-161 / DSM 6008 / Z-2901)</name>
    <dbReference type="NCBI Taxonomy" id="246194"/>
    <lineage>
        <taxon>Bacteria</taxon>
        <taxon>Bacillati</taxon>
        <taxon>Bacillota</taxon>
        <taxon>Clostridia</taxon>
        <taxon>Thermoanaerobacterales</taxon>
        <taxon>Thermoanaerobacteraceae</taxon>
        <taxon>Carboxydothermus</taxon>
    </lineage>
</organism>